<proteinExistence type="evidence at protein level"/>
<name>SSPI_BACSU</name>
<protein>
    <recommendedName>
        <fullName>Small, acid-soluble spore protein I</fullName>
        <shortName>SASP I</shortName>
    </recommendedName>
</protein>
<comment type="subcellular location">
    <subcellularLocation>
        <location evidence="1 2">Spore core</location>
    </subcellularLocation>
</comment>
<comment type="induction">
    <text evidence="1">Expressed only in the forespore compartment of sporulating cells. Disappears after 45 minutes of spore germination. Expression is sigma G-dependent.</text>
</comment>
<comment type="similarity">
    <text evidence="3">Belongs to the SspI family.</text>
</comment>
<organism>
    <name type="scientific">Bacillus subtilis (strain 168)</name>
    <dbReference type="NCBI Taxonomy" id="224308"/>
    <lineage>
        <taxon>Bacteria</taxon>
        <taxon>Bacillati</taxon>
        <taxon>Bacillota</taxon>
        <taxon>Bacilli</taxon>
        <taxon>Bacillales</taxon>
        <taxon>Bacillaceae</taxon>
        <taxon>Bacillus</taxon>
    </lineage>
</organism>
<feature type="chain" id="PRO_0000218335" description="Small, acid-soluble spore protein I">
    <location>
        <begin position="1"/>
        <end position="71"/>
    </location>
</feature>
<keyword id="KW-0903">Direct protein sequencing</keyword>
<keyword id="KW-1185">Reference proteome</keyword>
<keyword id="KW-0749">Sporulation</keyword>
<reference key="1">
    <citation type="journal article" date="1996" name="Microbiology">
        <title>The dnaB-pheA (256 degrees-240 degrees) region of the Bacillus subtilis chromosome containing genes responsible for stress responses, the utilization of plant cell walls and primary metabolism.</title>
        <authorList>
            <person name="Wipat A."/>
            <person name="Carter N."/>
            <person name="Brignell C.S."/>
            <person name="Guy J.B."/>
            <person name="Piper K."/>
            <person name="Sanders J."/>
            <person name="Emmerson P.T."/>
            <person name="Harwood C.R."/>
        </authorList>
    </citation>
    <scope>NUCLEOTIDE SEQUENCE [GENOMIC DNA]</scope>
</reference>
<reference key="2">
    <citation type="journal article" date="1997" name="Nature">
        <title>The complete genome sequence of the Gram-positive bacterium Bacillus subtilis.</title>
        <authorList>
            <person name="Kunst F."/>
            <person name="Ogasawara N."/>
            <person name="Moszer I."/>
            <person name="Albertini A.M."/>
            <person name="Alloni G."/>
            <person name="Azevedo V."/>
            <person name="Bertero M.G."/>
            <person name="Bessieres P."/>
            <person name="Bolotin A."/>
            <person name="Borchert S."/>
            <person name="Borriss R."/>
            <person name="Boursier L."/>
            <person name="Brans A."/>
            <person name="Braun M."/>
            <person name="Brignell S.C."/>
            <person name="Bron S."/>
            <person name="Brouillet S."/>
            <person name="Bruschi C.V."/>
            <person name="Caldwell B."/>
            <person name="Capuano V."/>
            <person name="Carter N.M."/>
            <person name="Choi S.-K."/>
            <person name="Codani J.-J."/>
            <person name="Connerton I.F."/>
            <person name="Cummings N.J."/>
            <person name="Daniel R.A."/>
            <person name="Denizot F."/>
            <person name="Devine K.M."/>
            <person name="Duesterhoeft A."/>
            <person name="Ehrlich S.D."/>
            <person name="Emmerson P.T."/>
            <person name="Entian K.-D."/>
            <person name="Errington J."/>
            <person name="Fabret C."/>
            <person name="Ferrari E."/>
            <person name="Foulger D."/>
            <person name="Fritz C."/>
            <person name="Fujita M."/>
            <person name="Fujita Y."/>
            <person name="Fuma S."/>
            <person name="Galizzi A."/>
            <person name="Galleron N."/>
            <person name="Ghim S.-Y."/>
            <person name="Glaser P."/>
            <person name="Goffeau A."/>
            <person name="Golightly E.J."/>
            <person name="Grandi G."/>
            <person name="Guiseppi G."/>
            <person name="Guy B.J."/>
            <person name="Haga K."/>
            <person name="Haiech J."/>
            <person name="Harwood C.R."/>
            <person name="Henaut A."/>
            <person name="Hilbert H."/>
            <person name="Holsappel S."/>
            <person name="Hosono S."/>
            <person name="Hullo M.-F."/>
            <person name="Itaya M."/>
            <person name="Jones L.-M."/>
            <person name="Joris B."/>
            <person name="Karamata D."/>
            <person name="Kasahara Y."/>
            <person name="Klaerr-Blanchard M."/>
            <person name="Klein C."/>
            <person name="Kobayashi Y."/>
            <person name="Koetter P."/>
            <person name="Koningstein G."/>
            <person name="Krogh S."/>
            <person name="Kumano M."/>
            <person name="Kurita K."/>
            <person name="Lapidus A."/>
            <person name="Lardinois S."/>
            <person name="Lauber J."/>
            <person name="Lazarevic V."/>
            <person name="Lee S.-M."/>
            <person name="Levine A."/>
            <person name="Liu H."/>
            <person name="Masuda S."/>
            <person name="Mauel C."/>
            <person name="Medigue C."/>
            <person name="Medina N."/>
            <person name="Mellado R.P."/>
            <person name="Mizuno M."/>
            <person name="Moestl D."/>
            <person name="Nakai S."/>
            <person name="Noback M."/>
            <person name="Noone D."/>
            <person name="O'Reilly M."/>
            <person name="Ogawa K."/>
            <person name="Ogiwara A."/>
            <person name="Oudega B."/>
            <person name="Park S.-H."/>
            <person name="Parro V."/>
            <person name="Pohl T.M."/>
            <person name="Portetelle D."/>
            <person name="Porwollik S."/>
            <person name="Prescott A.M."/>
            <person name="Presecan E."/>
            <person name="Pujic P."/>
            <person name="Purnelle B."/>
            <person name="Rapoport G."/>
            <person name="Rey M."/>
            <person name="Reynolds S."/>
            <person name="Rieger M."/>
            <person name="Rivolta C."/>
            <person name="Rocha E."/>
            <person name="Roche B."/>
            <person name="Rose M."/>
            <person name="Sadaie Y."/>
            <person name="Sato T."/>
            <person name="Scanlan E."/>
            <person name="Schleich S."/>
            <person name="Schroeter R."/>
            <person name="Scoffone F."/>
            <person name="Sekiguchi J."/>
            <person name="Sekowska A."/>
            <person name="Seror S.J."/>
            <person name="Serror P."/>
            <person name="Shin B.-S."/>
            <person name="Soldo B."/>
            <person name="Sorokin A."/>
            <person name="Tacconi E."/>
            <person name="Takagi T."/>
            <person name="Takahashi H."/>
            <person name="Takemaru K."/>
            <person name="Takeuchi M."/>
            <person name="Tamakoshi A."/>
            <person name="Tanaka T."/>
            <person name="Terpstra P."/>
            <person name="Tognoni A."/>
            <person name="Tosato V."/>
            <person name="Uchiyama S."/>
            <person name="Vandenbol M."/>
            <person name="Vannier F."/>
            <person name="Vassarotti A."/>
            <person name="Viari A."/>
            <person name="Wambutt R."/>
            <person name="Wedler E."/>
            <person name="Wedler H."/>
            <person name="Weitzenegger T."/>
            <person name="Winters P."/>
            <person name="Wipat A."/>
            <person name="Yamamoto H."/>
            <person name="Yamane K."/>
            <person name="Yasumoto K."/>
            <person name="Yata K."/>
            <person name="Yoshida K."/>
            <person name="Yoshikawa H.-F."/>
            <person name="Zumstein E."/>
            <person name="Yoshikawa H."/>
            <person name="Danchin A."/>
        </authorList>
    </citation>
    <scope>NUCLEOTIDE SEQUENCE [LARGE SCALE GENOMIC DNA]</scope>
    <source>
        <strain>168</strain>
    </source>
</reference>
<reference key="3">
    <citation type="journal article" date="1998" name="J. Bacteriol.">
        <title>New small, acid-soluble proteins unique to spores of Bacillus subtilis: identification of the coding genes and regulation and function of two of these genes.</title>
        <authorList>
            <person name="Bagyan I."/>
            <person name="Setlow B."/>
            <person name="Setlow P."/>
        </authorList>
    </citation>
    <scope>PROTEIN SEQUENCE OF 1-12</scope>
    <scope>SUBCELLULAR LOCATION</scope>
</reference>
<reference key="4">
    <citation type="journal article" date="2000" name="Gene">
        <title>Analysis of the regulation and function of five genes encoding small, acid-soluble spore proteins of Bacillus subtilis.</title>
        <authorList>
            <person name="Cabrera-Hernandez A."/>
            <person name="Setlow P."/>
        </authorList>
    </citation>
    <scope>SUBCELLULAR LOCATION</scope>
    <scope>INDUCTION</scope>
</reference>
<evidence type="ECO:0000269" key="1">
    <source>
    </source>
</evidence>
<evidence type="ECO:0000269" key="2">
    <source>
    </source>
</evidence>
<evidence type="ECO:0000305" key="3"/>
<gene>
    <name type="primary">sspI</name>
    <name type="synonym">ysfA</name>
    <name type="ordered locus">BSU28660</name>
</gene>
<accession>P94537</accession>
<sequence>MDLNLRHAVIANVTGNNQEQLEHTIVDAIQSGEEKMLPGLGVLFEVIWQHASESEKNEMLKTLEGGLKPAE</sequence>
<dbReference type="EMBL" id="Z75208">
    <property type="protein sequence ID" value="CAA99601.1"/>
    <property type="molecule type" value="Genomic_DNA"/>
</dbReference>
<dbReference type="EMBL" id="AL009126">
    <property type="protein sequence ID" value="CAB14826.1"/>
    <property type="molecule type" value="Genomic_DNA"/>
</dbReference>
<dbReference type="PIR" id="B69984">
    <property type="entry name" value="B69984"/>
</dbReference>
<dbReference type="RefSeq" id="NP_390744.1">
    <property type="nucleotide sequence ID" value="NC_000964.3"/>
</dbReference>
<dbReference type="RefSeq" id="WP_003229525.1">
    <property type="nucleotide sequence ID" value="NZ_OZ025638.1"/>
</dbReference>
<dbReference type="FunCoup" id="P94537">
    <property type="interactions" value="144"/>
</dbReference>
<dbReference type="STRING" id="224308.BSU28660"/>
<dbReference type="PaxDb" id="224308-BSU28660"/>
<dbReference type="EnsemblBacteria" id="CAB14826">
    <property type="protein sequence ID" value="CAB14826"/>
    <property type="gene ID" value="BSU_28660"/>
</dbReference>
<dbReference type="GeneID" id="937579"/>
<dbReference type="KEGG" id="bsu:BSU28660"/>
<dbReference type="PATRIC" id="fig|224308.179.peg.3114"/>
<dbReference type="eggNOG" id="ENOG5032YQ7">
    <property type="taxonomic scope" value="Bacteria"/>
</dbReference>
<dbReference type="InParanoid" id="P94537"/>
<dbReference type="OrthoDB" id="2453696at2"/>
<dbReference type="BioCyc" id="BSUB:BSU28660-MONOMER"/>
<dbReference type="Proteomes" id="UP000001570">
    <property type="component" value="Chromosome"/>
</dbReference>
<dbReference type="GO" id="GO:0030436">
    <property type="term" value="P:asexual sporulation"/>
    <property type="evidence" value="ECO:0007669"/>
    <property type="project" value="UniProtKB-UniRule"/>
</dbReference>
<dbReference type="GO" id="GO:0030435">
    <property type="term" value="P:sporulation resulting in formation of a cellular spore"/>
    <property type="evidence" value="ECO:0007669"/>
    <property type="project" value="UniProtKB-KW"/>
</dbReference>
<dbReference type="HAMAP" id="MF_00669">
    <property type="entry name" value="SspI"/>
    <property type="match status" value="1"/>
</dbReference>
<dbReference type="InterPro" id="IPR017525">
    <property type="entry name" value="SspI"/>
</dbReference>
<dbReference type="NCBIfam" id="TIGR03092">
    <property type="entry name" value="SASP_sspI"/>
    <property type="match status" value="1"/>
</dbReference>
<dbReference type="Pfam" id="PF14098">
    <property type="entry name" value="SSPI"/>
    <property type="match status" value="1"/>
</dbReference>